<dbReference type="EC" id="3.2.2.23" evidence="2"/>
<dbReference type="EC" id="4.2.99.18" evidence="2"/>
<dbReference type="EMBL" id="CU234118">
    <property type="protein sequence ID" value="CAL74045.1"/>
    <property type="molecule type" value="Genomic_DNA"/>
</dbReference>
<dbReference type="RefSeq" id="WP_011923346.1">
    <property type="nucleotide sequence ID" value="NC_009445.1"/>
</dbReference>
<dbReference type="SMR" id="A4YJG9"/>
<dbReference type="STRING" id="114615.BRADO0074"/>
<dbReference type="KEGG" id="bra:BRADO0074"/>
<dbReference type="eggNOG" id="COG0266">
    <property type="taxonomic scope" value="Bacteria"/>
</dbReference>
<dbReference type="HOGENOM" id="CLU_038423_1_1_5"/>
<dbReference type="OrthoDB" id="9800855at2"/>
<dbReference type="Proteomes" id="UP000001994">
    <property type="component" value="Chromosome"/>
</dbReference>
<dbReference type="GO" id="GO:0034039">
    <property type="term" value="F:8-oxo-7,8-dihydroguanine DNA N-glycosylase activity"/>
    <property type="evidence" value="ECO:0007669"/>
    <property type="project" value="TreeGrafter"/>
</dbReference>
<dbReference type="GO" id="GO:0140078">
    <property type="term" value="F:class I DNA-(apurinic or apyrimidinic site) endonuclease activity"/>
    <property type="evidence" value="ECO:0007669"/>
    <property type="project" value="UniProtKB-EC"/>
</dbReference>
<dbReference type="GO" id="GO:0003684">
    <property type="term" value="F:damaged DNA binding"/>
    <property type="evidence" value="ECO:0007669"/>
    <property type="project" value="InterPro"/>
</dbReference>
<dbReference type="GO" id="GO:0008270">
    <property type="term" value="F:zinc ion binding"/>
    <property type="evidence" value="ECO:0007669"/>
    <property type="project" value="UniProtKB-UniRule"/>
</dbReference>
<dbReference type="GO" id="GO:0006284">
    <property type="term" value="P:base-excision repair"/>
    <property type="evidence" value="ECO:0007669"/>
    <property type="project" value="InterPro"/>
</dbReference>
<dbReference type="CDD" id="cd08966">
    <property type="entry name" value="EcFpg-like_N"/>
    <property type="match status" value="1"/>
</dbReference>
<dbReference type="FunFam" id="1.10.8.50:FF:000003">
    <property type="entry name" value="Formamidopyrimidine-DNA glycosylase"/>
    <property type="match status" value="1"/>
</dbReference>
<dbReference type="FunFam" id="3.20.190.10:FF:000001">
    <property type="entry name" value="Formamidopyrimidine-DNA glycosylase"/>
    <property type="match status" value="1"/>
</dbReference>
<dbReference type="Gene3D" id="1.10.8.50">
    <property type="match status" value="1"/>
</dbReference>
<dbReference type="Gene3D" id="3.20.190.10">
    <property type="entry name" value="MutM-like, N-terminal"/>
    <property type="match status" value="1"/>
</dbReference>
<dbReference type="HAMAP" id="MF_00103">
    <property type="entry name" value="Fapy_DNA_glycosyl"/>
    <property type="match status" value="1"/>
</dbReference>
<dbReference type="InterPro" id="IPR015886">
    <property type="entry name" value="DNA_glyclase/AP_lyase_DNA-bd"/>
</dbReference>
<dbReference type="InterPro" id="IPR020629">
    <property type="entry name" value="Formamido-pyr_DNA_Glyclase"/>
</dbReference>
<dbReference type="InterPro" id="IPR012319">
    <property type="entry name" value="FPG_cat"/>
</dbReference>
<dbReference type="InterPro" id="IPR035937">
    <property type="entry name" value="MutM-like_N-ter"/>
</dbReference>
<dbReference type="InterPro" id="IPR010979">
    <property type="entry name" value="Ribosomal_uS13-like_H2TH"/>
</dbReference>
<dbReference type="InterPro" id="IPR000214">
    <property type="entry name" value="Znf_DNA_glyclase/AP_lyase"/>
</dbReference>
<dbReference type="InterPro" id="IPR010663">
    <property type="entry name" value="Znf_FPG/IleRS"/>
</dbReference>
<dbReference type="NCBIfam" id="TIGR00577">
    <property type="entry name" value="fpg"/>
    <property type="match status" value="1"/>
</dbReference>
<dbReference type="NCBIfam" id="NF002211">
    <property type="entry name" value="PRK01103.1"/>
    <property type="match status" value="1"/>
</dbReference>
<dbReference type="PANTHER" id="PTHR22993">
    <property type="entry name" value="FORMAMIDOPYRIMIDINE-DNA GLYCOSYLASE"/>
    <property type="match status" value="1"/>
</dbReference>
<dbReference type="PANTHER" id="PTHR22993:SF9">
    <property type="entry name" value="FORMAMIDOPYRIMIDINE-DNA GLYCOSYLASE"/>
    <property type="match status" value="1"/>
</dbReference>
<dbReference type="Pfam" id="PF01149">
    <property type="entry name" value="Fapy_DNA_glyco"/>
    <property type="match status" value="1"/>
</dbReference>
<dbReference type="Pfam" id="PF06831">
    <property type="entry name" value="H2TH"/>
    <property type="match status" value="1"/>
</dbReference>
<dbReference type="Pfam" id="PF06827">
    <property type="entry name" value="zf-FPG_IleRS"/>
    <property type="match status" value="1"/>
</dbReference>
<dbReference type="SMART" id="SM00898">
    <property type="entry name" value="Fapy_DNA_glyco"/>
    <property type="match status" value="1"/>
</dbReference>
<dbReference type="SMART" id="SM01232">
    <property type="entry name" value="H2TH"/>
    <property type="match status" value="1"/>
</dbReference>
<dbReference type="SUPFAM" id="SSF57716">
    <property type="entry name" value="Glucocorticoid receptor-like (DNA-binding domain)"/>
    <property type="match status" value="1"/>
</dbReference>
<dbReference type="SUPFAM" id="SSF81624">
    <property type="entry name" value="N-terminal domain of MutM-like DNA repair proteins"/>
    <property type="match status" value="1"/>
</dbReference>
<dbReference type="SUPFAM" id="SSF46946">
    <property type="entry name" value="S13-like H2TH domain"/>
    <property type="match status" value="1"/>
</dbReference>
<dbReference type="PROSITE" id="PS51068">
    <property type="entry name" value="FPG_CAT"/>
    <property type="match status" value="1"/>
</dbReference>
<dbReference type="PROSITE" id="PS51066">
    <property type="entry name" value="ZF_FPG_2"/>
    <property type="match status" value="1"/>
</dbReference>
<keyword id="KW-0227">DNA damage</keyword>
<keyword id="KW-0234">DNA repair</keyword>
<keyword id="KW-0238">DNA-binding</keyword>
<keyword id="KW-0326">Glycosidase</keyword>
<keyword id="KW-0378">Hydrolase</keyword>
<keyword id="KW-0456">Lyase</keyword>
<keyword id="KW-0479">Metal-binding</keyword>
<keyword id="KW-0511">Multifunctional enzyme</keyword>
<keyword id="KW-1185">Reference proteome</keyword>
<keyword id="KW-0862">Zinc</keyword>
<keyword id="KW-0863">Zinc-finger</keyword>
<proteinExistence type="inferred from homology"/>
<sequence>MPELPEVETVRRGLQPVMEGAKIVTAEARRGDLRFPFQPDFVKRLQGQTVRGLGRRAKYLLADLGSGDVLLMHLGMSGSFRVIKPEHEETPGEFHYPRGKDSVHDHVVFHMSSGADIVFNDPRRFGFMKIIGRGEIETEPHLKDLGPEPLGNEFDAAMLARACAGKKTSLKAALLDQRVVAGLGNIYVCEALFRAHLSPRRLAATLATRKGEPTDHAKRLVEAIHTVLNEAIRAGGSSLRDHRQTTGELGYFQHSFQVYDREGEPCRTDGCEGVVKRFVQNGRSTFWCPKCQR</sequence>
<protein>
    <recommendedName>
        <fullName evidence="2">Formamidopyrimidine-DNA glycosylase</fullName>
        <shortName evidence="2">Fapy-DNA glycosylase</shortName>
        <ecNumber evidence="2">3.2.2.23</ecNumber>
    </recommendedName>
    <alternativeName>
        <fullName evidence="2">DNA-(apurinic or apyrimidinic site) lyase MutM</fullName>
        <shortName evidence="2">AP lyase MutM</shortName>
        <ecNumber evidence="2">4.2.99.18</ecNumber>
    </alternativeName>
</protein>
<gene>
    <name evidence="2" type="primary">mutM</name>
    <name evidence="2" type="synonym">fpg</name>
    <name type="ordered locus">BRADO0074</name>
</gene>
<accession>A4YJG9</accession>
<reference key="1">
    <citation type="journal article" date="2007" name="Science">
        <title>Legumes symbioses: absence of nod genes in photosynthetic bradyrhizobia.</title>
        <authorList>
            <person name="Giraud E."/>
            <person name="Moulin L."/>
            <person name="Vallenet D."/>
            <person name="Barbe V."/>
            <person name="Cytryn E."/>
            <person name="Avarre J.-C."/>
            <person name="Jaubert M."/>
            <person name="Simon D."/>
            <person name="Cartieaux F."/>
            <person name="Prin Y."/>
            <person name="Bena G."/>
            <person name="Hannibal L."/>
            <person name="Fardoux J."/>
            <person name="Kojadinovic M."/>
            <person name="Vuillet L."/>
            <person name="Lajus A."/>
            <person name="Cruveiller S."/>
            <person name="Rouy Z."/>
            <person name="Mangenot S."/>
            <person name="Segurens B."/>
            <person name="Dossat C."/>
            <person name="Franck W.L."/>
            <person name="Chang W.-S."/>
            <person name="Saunders E."/>
            <person name="Bruce D."/>
            <person name="Richardson P."/>
            <person name="Normand P."/>
            <person name="Dreyfus B."/>
            <person name="Pignol D."/>
            <person name="Stacey G."/>
            <person name="Emerich D."/>
            <person name="Vermeglio A."/>
            <person name="Medigue C."/>
            <person name="Sadowsky M."/>
        </authorList>
    </citation>
    <scope>NUCLEOTIDE SEQUENCE [LARGE SCALE GENOMIC DNA]</scope>
    <source>
        <strain>ORS 278</strain>
    </source>
</reference>
<evidence type="ECO:0000250" key="1"/>
<evidence type="ECO:0000255" key="2">
    <source>
        <dbReference type="HAMAP-Rule" id="MF_00103"/>
    </source>
</evidence>
<organism>
    <name type="scientific">Bradyrhizobium sp. (strain ORS 278)</name>
    <dbReference type="NCBI Taxonomy" id="114615"/>
    <lineage>
        <taxon>Bacteria</taxon>
        <taxon>Pseudomonadati</taxon>
        <taxon>Pseudomonadota</taxon>
        <taxon>Alphaproteobacteria</taxon>
        <taxon>Hyphomicrobiales</taxon>
        <taxon>Nitrobacteraceae</taxon>
        <taxon>Bradyrhizobium</taxon>
    </lineage>
</organism>
<feature type="initiator methionine" description="Removed" evidence="1">
    <location>
        <position position="1"/>
    </location>
</feature>
<feature type="chain" id="PRO_1000008679" description="Formamidopyrimidine-DNA glycosylase">
    <location>
        <begin position="2"/>
        <end position="293"/>
    </location>
</feature>
<feature type="zinc finger region" description="FPG-type" evidence="2">
    <location>
        <begin position="257"/>
        <end position="293"/>
    </location>
</feature>
<feature type="active site" description="Schiff-base intermediate with DNA" evidence="2">
    <location>
        <position position="2"/>
    </location>
</feature>
<feature type="active site" description="Proton donor" evidence="2">
    <location>
        <position position="3"/>
    </location>
</feature>
<feature type="active site" description="Proton donor; for beta-elimination activity" evidence="2">
    <location>
        <position position="58"/>
    </location>
</feature>
<feature type="active site" description="Proton donor; for delta-elimination activity" evidence="2">
    <location>
        <position position="283"/>
    </location>
</feature>
<feature type="binding site" evidence="2">
    <location>
        <position position="104"/>
    </location>
    <ligand>
        <name>DNA</name>
        <dbReference type="ChEBI" id="CHEBI:16991"/>
    </ligand>
</feature>
<feature type="binding site" evidence="2">
    <location>
        <position position="123"/>
    </location>
    <ligand>
        <name>DNA</name>
        <dbReference type="ChEBI" id="CHEBI:16991"/>
    </ligand>
</feature>
<feature type="binding site" evidence="2">
    <location>
        <position position="166"/>
    </location>
    <ligand>
        <name>DNA</name>
        <dbReference type="ChEBI" id="CHEBI:16991"/>
    </ligand>
</feature>
<comment type="function">
    <text evidence="2">Involved in base excision repair of DNA damaged by oxidation or by mutagenic agents. Acts as a DNA glycosylase that recognizes and removes damaged bases. Has a preference for oxidized purines, such as 7,8-dihydro-8-oxoguanine (8-oxoG). Has AP (apurinic/apyrimidinic) lyase activity and introduces nicks in the DNA strand. Cleaves the DNA backbone by beta-delta elimination to generate a single-strand break at the site of the removed base with both 3'- and 5'-phosphates.</text>
</comment>
<comment type="catalytic activity">
    <reaction evidence="2">
        <text>Hydrolysis of DNA containing ring-opened 7-methylguanine residues, releasing 2,6-diamino-4-hydroxy-5-(N-methyl)formamidopyrimidine.</text>
        <dbReference type="EC" id="3.2.2.23"/>
    </reaction>
</comment>
<comment type="catalytic activity">
    <reaction evidence="2">
        <text>2'-deoxyribonucleotide-(2'-deoxyribose 5'-phosphate)-2'-deoxyribonucleotide-DNA = a 3'-end 2'-deoxyribonucleotide-(2,3-dehydro-2,3-deoxyribose 5'-phosphate)-DNA + a 5'-end 5'-phospho-2'-deoxyribonucleoside-DNA + H(+)</text>
        <dbReference type="Rhea" id="RHEA:66592"/>
        <dbReference type="Rhea" id="RHEA-COMP:13180"/>
        <dbReference type="Rhea" id="RHEA-COMP:16897"/>
        <dbReference type="Rhea" id="RHEA-COMP:17067"/>
        <dbReference type="ChEBI" id="CHEBI:15378"/>
        <dbReference type="ChEBI" id="CHEBI:136412"/>
        <dbReference type="ChEBI" id="CHEBI:157695"/>
        <dbReference type="ChEBI" id="CHEBI:167181"/>
        <dbReference type="EC" id="4.2.99.18"/>
    </reaction>
</comment>
<comment type="cofactor">
    <cofactor evidence="2">
        <name>Zn(2+)</name>
        <dbReference type="ChEBI" id="CHEBI:29105"/>
    </cofactor>
    <text evidence="2">Binds 1 zinc ion per subunit.</text>
</comment>
<comment type="subunit">
    <text evidence="2">Monomer.</text>
</comment>
<comment type="similarity">
    <text evidence="2">Belongs to the FPG family.</text>
</comment>
<name>FPG_BRASO</name>